<organism>
    <name type="scientific">Mus musculus</name>
    <name type="common">Mouse</name>
    <dbReference type="NCBI Taxonomy" id="10090"/>
    <lineage>
        <taxon>Eukaryota</taxon>
        <taxon>Metazoa</taxon>
        <taxon>Chordata</taxon>
        <taxon>Craniata</taxon>
        <taxon>Vertebrata</taxon>
        <taxon>Euteleostomi</taxon>
        <taxon>Mammalia</taxon>
        <taxon>Eutheria</taxon>
        <taxon>Euarchontoglires</taxon>
        <taxon>Glires</taxon>
        <taxon>Rodentia</taxon>
        <taxon>Myomorpha</taxon>
        <taxon>Muroidea</taxon>
        <taxon>Muridae</taxon>
        <taxon>Murinae</taxon>
        <taxon>Mus</taxon>
        <taxon>Mus</taxon>
    </lineage>
</organism>
<proteinExistence type="evidence at transcript level"/>
<comment type="function">
    <text evidence="4">Growth factor for endothelial cells. VEGF-B167 binds heparin and neuropilin-1 whereas the binding to neuropilin-1 of VEGF-B186 is regulated by proteolysis. VEGF-B seems to be required for normal heart function in adult but is not required for proper development of the cardiovascular system either during development or for angiogenesis in adults.</text>
</comment>
<comment type="subunit">
    <text>Homodimer; disulfide-linked. Can also form heterodimer with VEGF.</text>
</comment>
<comment type="subcellular location">
    <subcellularLocation>
        <location>Secreted</location>
    </subcellularLocation>
    <text>Secreted but remains associated to cells or to the extracellular matrix unless released by heparin.</text>
</comment>
<comment type="alternative products">
    <event type="alternative splicing"/>
    <isoform>
        <id>P49766-1</id>
        <name>VEGF-B186</name>
        <sequence type="displayed"/>
    </isoform>
    <isoform>
        <id>P49766-2</id>
        <name>VEGF-B167</name>
        <sequence type="described" ref="VSP_004641"/>
    </isoform>
    <text>Additional isoforms seem to exist.</text>
</comment>
<comment type="tissue specificity">
    <text>Abundantly expressed in heart, brain, kidney and skeletal muscle.</text>
</comment>
<comment type="PTM">
    <text>VEGF-B186 is O-glycosylated.</text>
</comment>
<comment type="similarity">
    <text evidence="8">Belongs to the PDGF/VEGF growth factor family.</text>
</comment>
<evidence type="ECO:0000250" key="1"/>
<evidence type="ECO:0000255" key="2"/>
<evidence type="ECO:0000256" key="3">
    <source>
        <dbReference type="SAM" id="MobiDB-lite"/>
    </source>
</evidence>
<evidence type="ECO:0000269" key="4">
    <source>
    </source>
</evidence>
<evidence type="ECO:0000303" key="5">
    <source>
    </source>
</evidence>
<evidence type="ECO:0000303" key="6">
    <source>
    </source>
</evidence>
<evidence type="ECO:0000303" key="7">
    <source>
    </source>
</evidence>
<evidence type="ECO:0000305" key="8"/>
<dbReference type="EMBL" id="U43836">
    <property type="protein sequence ID" value="AAC52932.1"/>
    <property type="molecule type" value="mRNA"/>
</dbReference>
<dbReference type="EMBL" id="U43837">
    <property type="protein sequence ID" value="AAC52553.1"/>
    <property type="molecule type" value="mRNA"/>
</dbReference>
<dbReference type="EMBL" id="U52820">
    <property type="protein sequence ID" value="AAC52823.1"/>
    <property type="molecule type" value="mRNA"/>
</dbReference>
<dbReference type="EMBL" id="U48800">
    <property type="protein sequence ID" value="AAB06273.1"/>
    <property type="molecule type" value="mRNA"/>
</dbReference>
<dbReference type="EMBL" id="AK148188">
    <property type="protein sequence ID" value="BAE28405.1"/>
    <property type="molecule type" value="mRNA"/>
</dbReference>
<dbReference type="EMBL" id="BC046303">
    <property type="protein sequence ID" value="AAH46303.1"/>
    <property type="molecule type" value="mRNA"/>
</dbReference>
<dbReference type="CCDS" id="CCDS29516.1">
    <molecule id="P49766-1"/>
</dbReference>
<dbReference type="CCDS" id="CCDS50373.1">
    <molecule id="P49766-2"/>
</dbReference>
<dbReference type="PIR" id="JC4679">
    <property type="entry name" value="JC4679"/>
</dbReference>
<dbReference type="PIR" id="JC4680">
    <property type="entry name" value="JC4680"/>
</dbReference>
<dbReference type="RefSeq" id="NP_001172093.1">
    <molecule id="P49766-2"/>
    <property type="nucleotide sequence ID" value="NM_001185164.1"/>
</dbReference>
<dbReference type="RefSeq" id="NP_035827.1">
    <molecule id="P49766-1"/>
    <property type="nucleotide sequence ID" value="NM_011697.3"/>
</dbReference>
<dbReference type="SMR" id="P49766"/>
<dbReference type="BioGRID" id="204513">
    <property type="interactions" value="4"/>
</dbReference>
<dbReference type="FunCoup" id="P49766">
    <property type="interactions" value="873"/>
</dbReference>
<dbReference type="IntAct" id="P49766">
    <property type="interactions" value="1"/>
</dbReference>
<dbReference type="STRING" id="10090.ENSMUSP00000025914"/>
<dbReference type="GlyGen" id="P49766">
    <property type="glycosylation" value="2 sites"/>
</dbReference>
<dbReference type="PhosphoSitePlus" id="P49766"/>
<dbReference type="PaxDb" id="10090-ENSMUSP00000025914"/>
<dbReference type="PeptideAtlas" id="P49766"/>
<dbReference type="ProteomicsDB" id="275177">
    <molecule id="P49766-1"/>
</dbReference>
<dbReference type="ProteomicsDB" id="275178">
    <molecule id="P49766-2"/>
</dbReference>
<dbReference type="Antibodypedia" id="15308">
    <property type="antibodies" value="702 antibodies from 36 providers"/>
</dbReference>
<dbReference type="DNASU" id="22340"/>
<dbReference type="Ensembl" id="ENSMUST00000025914.7">
    <molecule id="P49766-1"/>
    <property type="protein sequence ID" value="ENSMUSP00000025914.7"/>
    <property type="gene ID" value="ENSMUSG00000024962.14"/>
</dbReference>
<dbReference type="Ensembl" id="ENSMUST00000130048.8">
    <molecule id="P49766-2"/>
    <property type="protein sequence ID" value="ENSMUSP00000120860.2"/>
    <property type="gene ID" value="ENSMUSG00000024962.14"/>
</dbReference>
<dbReference type="GeneID" id="22340"/>
<dbReference type="KEGG" id="mmu:22340"/>
<dbReference type="UCSC" id="uc008gjv.2">
    <molecule id="P49766-1"/>
    <property type="organism name" value="mouse"/>
</dbReference>
<dbReference type="UCSC" id="uc008gjw.2">
    <molecule id="P49766-2"/>
    <property type="organism name" value="mouse"/>
</dbReference>
<dbReference type="AGR" id="MGI:106199"/>
<dbReference type="CTD" id="7423"/>
<dbReference type="MGI" id="MGI:106199">
    <property type="gene designation" value="Vegfb"/>
</dbReference>
<dbReference type="VEuPathDB" id="HostDB:ENSMUSG00000024962"/>
<dbReference type="eggNOG" id="ENOG502SU5Y">
    <property type="taxonomic scope" value="Eukaryota"/>
</dbReference>
<dbReference type="GeneTree" id="ENSGT00940000161844"/>
<dbReference type="HOGENOM" id="CLU_042996_2_0_1"/>
<dbReference type="InParanoid" id="P49766"/>
<dbReference type="OMA" id="KCEATRT"/>
<dbReference type="OrthoDB" id="6370328at2759"/>
<dbReference type="PhylomeDB" id="P49766"/>
<dbReference type="TreeFam" id="TF319554"/>
<dbReference type="Reactome" id="R-MMU-114608">
    <property type="pathway name" value="Platelet degranulation"/>
</dbReference>
<dbReference type="Reactome" id="R-MMU-194313">
    <property type="pathway name" value="VEGF ligand-receptor interactions"/>
</dbReference>
<dbReference type="Reactome" id="R-MMU-195399">
    <property type="pathway name" value="VEGF binds to VEGFR leading to receptor dimerization"/>
</dbReference>
<dbReference type="BioGRID-ORCS" id="22340">
    <property type="hits" value="1 hit in 78 CRISPR screens"/>
</dbReference>
<dbReference type="ChiTaRS" id="Vegfb">
    <property type="organism name" value="mouse"/>
</dbReference>
<dbReference type="PRO" id="PR:P49766"/>
<dbReference type="Proteomes" id="UP000000589">
    <property type="component" value="Chromosome 19"/>
</dbReference>
<dbReference type="RNAct" id="P49766">
    <property type="molecule type" value="protein"/>
</dbReference>
<dbReference type="Bgee" id="ENSMUSG00000024962">
    <property type="expression patterns" value="Expressed in myocardium and 269 other cell types or tissues"/>
</dbReference>
<dbReference type="GO" id="GO:0005576">
    <property type="term" value="C:extracellular region"/>
    <property type="evidence" value="ECO:0000314"/>
    <property type="project" value="MGI"/>
</dbReference>
<dbReference type="GO" id="GO:0016020">
    <property type="term" value="C:membrane"/>
    <property type="evidence" value="ECO:0007669"/>
    <property type="project" value="InterPro"/>
</dbReference>
<dbReference type="GO" id="GO:0008083">
    <property type="term" value="F:growth factor activity"/>
    <property type="evidence" value="ECO:0007669"/>
    <property type="project" value="UniProtKB-KW"/>
</dbReference>
<dbReference type="GO" id="GO:0008201">
    <property type="term" value="F:heparin binding"/>
    <property type="evidence" value="ECO:0007669"/>
    <property type="project" value="UniProtKB-KW"/>
</dbReference>
<dbReference type="GO" id="GO:0042802">
    <property type="term" value="F:identical protein binding"/>
    <property type="evidence" value="ECO:0000353"/>
    <property type="project" value="MGI"/>
</dbReference>
<dbReference type="GO" id="GO:0001525">
    <property type="term" value="P:angiogenesis"/>
    <property type="evidence" value="ECO:0007669"/>
    <property type="project" value="UniProtKB-KW"/>
</dbReference>
<dbReference type="GO" id="GO:0060048">
    <property type="term" value="P:cardiac muscle contraction"/>
    <property type="evidence" value="ECO:0000315"/>
    <property type="project" value="MGI"/>
</dbReference>
<dbReference type="GO" id="GO:0030154">
    <property type="term" value="P:cell differentiation"/>
    <property type="evidence" value="ECO:0007669"/>
    <property type="project" value="UniProtKB-KW"/>
</dbReference>
<dbReference type="GO" id="GO:0060976">
    <property type="term" value="P:coronary vasculature development"/>
    <property type="evidence" value="ECO:0000315"/>
    <property type="project" value="MGI"/>
</dbReference>
<dbReference type="GO" id="GO:0007507">
    <property type="term" value="P:heart development"/>
    <property type="evidence" value="ECO:0000315"/>
    <property type="project" value="MGI"/>
</dbReference>
<dbReference type="GO" id="GO:0051781">
    <property type="term" value="P:positive regulation of cell division"/>
    <property type="evidence" value="ECO:0007669"/>
    <property type="project" value="UniProtKB-KW"/>
</dbReference>
<dbReference type="GO" id="GO:0006493">
    <property type="term" value="P:protein O-linked glycosylation"/>
    <property type="evidence" value="ECO:0000314"/>
    <property type="project" value="MGI"/>
</dbReference>
<dbReference type="CDD" id="cd00135">
    <property type="entry name" value="PDGF"/>
    <property type="match status" value="1"/>
</dbReference>
<dbReference type="FunFam" id="2.10.90.10:FF:000030">
    <property type="entry name" value="Vascular endothelial growth factor B"/>
    <property type="match status" value="1"/>
</dbReference>
<dbReference type="Gene3D" id="2.10.90.10">
    <property type="entry name" value="Cystine-knot cytokines"/>
    <property type="match status" value="1"/>
</dbReference>
<dbReference type="InterPro" id="IPR029034">
    <property type="entry name" value="Cystine-knot_cytokine"/>
</dbReference>
<dbReference type="InterPro" id="IPR023581">
    <property type="entry name" value="PD_growth_factor_CS"/>
</dbReference>
<dbReference type="InterPro" id="IPR000072">
    <property type="entry name" value="PDGF/VEGF_dom"/>
</dbReference>
<dbReference type="InterPro" id="IPR050507">
    <property type="entry name" value="PDGF/VEGF_growth_factor"/>
</dbReference>
<dbReference type="PANTHER" id="PTHR12025">
    <property type="entry name" value="VASCULAR ENDOTHELIAL GROWTH FACTOR"/>
    <property type="match status" value="1"/>
</dbReference>
<dbReference type="PANTHER" id="PTHR12025:SF12">
    <property type="entry name" value="VASCULAR ENDOTHELIAL GROWTH FACTOR B"/>
    <property type="match status" value="1"/>
</dbReference>
<dbReference type="Pfam" id="PF00341">
    <property type="entry name" value="PDGF"/>
    <property type="match status" value="1"/>
</dbReference>
<dbReference type="SMART" id="SM00141">
    <property type="entry name" value="PDGF"/>
    <property type="match status" value="1"/>
</dbReference>
<dbReference type="SUPFAM" id="SSF57501">
    <property type="entry name" value="Cystine-knot cytokines"/>
    <property type="match status" value="1"/>
</dbReference>
<dbReference type="PROSITE" id="PS00249">
    <property type="entry name" value="PDGF_1"/>
    <property type="match status" value="1"/>
</dbReference>
<dbReference type="PROSITE" id="PS50278">
    <property type="entry name" value="PDGF_2"/>
    <property type="match status" value="1"/>
</dbReference>
<accession>P49766</accession>
<accession>Q3UG04</accession>
<accession>Q5D0B1</accession>
<accession>Q64290</accession>
<protein>
    <recommendedName>
        <fullName>Vascular endothelial growth factor B</fullName>
        <shortName>VEGF-B</shortName>
    </recommendedName>
    <alternativeName>
        <fullName>VEGF-related factor</fullName>
        <shortName>VRF</shortName>
    </alternativeName>
</protein>
<name>VEGFB_MOUSE</name>
<keyword id="KW-0025">Alternative splicing</keyword>
<keyword id="KW-0037">Angiogenesis</keyword>
<keyword id="KW-0217">Developmental protein</keyword>
<keyword id="KW-0221">Differentiation</keyword>
<keyword id="KW-1015">Disulfide bond</keyword>
<keyword id="KW-0325">Glycoprotein</keyword>
<keyword id="KW-0339">Growth factor</keyword>
<keyword id="KW-0358">Heparin-binding</keyword>
<keyword id="KW-0497">Mitogen</keyword>
<keyword id="KW-1185">Reference proteome</keyword>
<keyword id="KW-0964">Secreted</keyword>
<keyword id="KW-0732">Signal</keyword>
<gene>
    <name type="primary">Vegfb</name>
    <name type="synonym">Vrf</name>
</gene>
<reference key="1">
    <citation type="journal article" date="1996" name="Biochem. Biophys. Res. Commun.">
        <title>Characterization of the murine VEGF-related factor gene.</title>
        <authorList>
            <person name="Townson S."/>
            <person name="Lagercrantz J."/>
            <person name="Grimmond S."/>
            <person name="Silins G."/>
            <person name="Nordenskjoeld M."/>
            <person name="Weber G."/>
            <person name="Hayward N.K."/>
        </authorList>
    </citation>
    <scope>NUCLEOTIDE SEQUENCE [MRNA] (ISOFORMS VEGF-B186 AND VEGF-B167)</scope>
    <source>
        <tissue>Brain</tissue>
    </source>
</reference>
<reference key="2">
    <citation type="journal article" date="1996" name="J. Biol. Chem.">
        <title>Genomic organization of the mouse and human genes for vascular endothelial growth factor B (VEGF-B) and characterization of a second splice isoform.</title>
        <authorList>
            <person name="Olofsson B."/>
            <person name="Pajusola K."/>
            <person name="von Euler G."/>
            <person name="Chilov D."/>
            <person name="Alitalo K."/>
            <person name="Eriksson U."/>
        </authorList>
    </citation>
    <scope>NUCLEOTIDE SEQUENCE [MRNA] (ISOFORM VEGF-B186)</scope>
    <source>
        <tissue>Heart</tissue>
    </source>
</reference>
<reference key="3">
    <citation type="journal article" date="1996" name="Proc. Natl. Acad. Sci. U.S.A.">
        <title>Vascular endothelial growth factor B, a novel growth factor for endothelial cells.</title>
        <authorList>
            <person name="Olofsson B."/>
            <person name="Pajusola K."/>
            <person name="Kaipainen A."/>
            <person name="von Euler G."/>
            <person name="Joukov V."/>
            <person name="Saksela O."/>
            <person name="Orpana A."/>
            <person name="Pettersson R.F."/>
            <person name="Alitalo K."/>
            <person name="Eriksson U."/>
        </authorList>
    </citation>
    <scope>NUCLEOTIDE SEQUENCE [MRNA] (ISOFORM VEGF-B167)</scope>
    <source>
        <tissue>Heart</tissue>
    </source>
</reference>
<reference key="4">
    <citation type="journal article" date="2005" name="Science">
        <title>The transcriptional landscape of the mammalian genome.</title>
        <authorList>
            <person name="Carninci P."/>
            <person name="Kasukawa T."/>
            <person name="Katayama S."/>
            <person name="Gough J."/>
            <person name="Frith M.C."/>
            <person name="Maeda N."/>
            <person name="Oyama R."/>
            <person name="Ravasi T."/>
            <person name="Lenhard B."/>
            <person name="Wells C."/>
            <person name="Kodzius R."/>
            <person name="Shimokawa K."/>
            <person name="Bajic V.B."/>
            <person name="Brenner S.E."/>
            <person name="Batalov S."/>
            <person name="Forrest A.R."/>
            <person name="Zavolan M."/>
            <person name="Davis M.J."/>
            <person name="Wilming L.G."/>
            <person name="Aidinis V."/>
            <person name="Allen J.E."/>
            <person name="Ambesi-Impiombato A."/>
            <person name="Apweiler R."/>
            <person name="Aturaliya R.N."/>
            <person name="Bailey T.L."/>
            <person name="Bansal M."/>
            <person name="Baxter L."/>
            <person name="Beisel K.W."/>
            <person name="Bersano T."/>
            <person name="Bono H."/>
            <person name="Chalk A.M."/>
            <person name="Chiu K.P."/>
            <person name="Choudhary V."/>
            <person name="Christoffels A."/>
            <person name="Clutterbuck D.R."/>
            <person name="Crowe M.L."/>
            <person name="Dalla E."/>
            <person name="Dalrymple B.P."/>
            <person name="de Bono B."/>
            <person name="Della Gatta G."/>
            <person name="di Bernardo D."/>
            <person name="Down T."/>
            <person name="Engstrom P."/>
            <person name="Fagiolini M."/>
            <person name="Faulkner G."/>
            <person name="Fletcher C.F."/>
            <person name="Fukushima T."/>
            <person name="Furuno M."/>
            <person name="Futaki S."/>
            <person name="Gariboldi M."/>
            <person name="Georgii-Hemming P."/>
            <person name="Gingeras T.R."/>
            <person name="Gojobori T."/>
            <person name="Green R.E."/>
            <person name="Gustincich S."/>
            <person name="Harbers M."/>
            <person name="Hayashi Y."/>
            <person name="Hensch T.K."/>
            <person name="Hirokawa N."/>
            <person name="Hill D."/>
            <person name="Huminiecki L."/>
            <person name="Iacono M."/>
            <person name="Ikeo K."/>
            <person name="Iwama A."/>
            <person name="Ishikawa T."/>
            <person name="Jakt M."/>
            <person name="Kanapin A."/>
            <person name="Katoh M."/>
            <person name="Kawasawa Y."/>
            <person name="Kelso J."/>
            <person name="Kitamura H."/>
            <person name="Kitano H."/>
            <person name="Kollias G."/>
            <person name="Krishnan S.P."/>
            <person name="Kruger A."/>
            <person name="Kummerfeld S.K."/>
            <person name="Kurochkin I.V."/>
            <person name="Lareau L.F."/>
            <person name="Lazarevic D."/>
            <person name="Lipovich L."/>
            <person name="Liu J."/>
            <person name="Liuni S."/>
            <person name="McWilliam S."/>
            <person name="Madan Babu M."/>
            <person name="Madera M."/>
            <person name="Marchionni L."/>
            <person name="Matsuda H."/>
            <person name="Matsuzawa S."/>
            <person name="Miki H."/>
            <person name="Mignone F."/>
            <person name="Miyake S."/>
            <person name="Morris K."/>
            <person name="Mottagui-Tabar S."/>
            <person name="Mulder N."/>
            <person name="Nakano N."/>
            <person name="Nakauchi H."/>
            <person name="Ng P."/>
            <person name="Nilsson R."/>
            <person name="Nishiguchi S."/>
            <person name="Nishikawa S."/>
            <person name="Nori F."/>
            <person name="Ohara O."/>
            <person name="Okazaki Y."/>
            <person name="Orlando V."/>
            <person name="Pang K.C."/>
            <person name="Pavan W.J."/>
            <person name="Pavesi G."/>
            <person name="Pesole G."/>
            <person name="Petrovsky N."/>
            <person name="Piazza S."/>
            <person name="Reed J."/>
            <person name="Reid J.F."/>
            <person name="Ring B.Z."/>
            <person name="Ringwald M."/>
            <person name="Rost B."/>
            <person name="Ruan Y."/>
            <person name="Salzberg S.L."/>
            <person name="Sandelin A."/>
            <person name="Schneider C."/>
            <person name="Schoenbach C."/>
            <person name="Sekiguchi K."/>
            <person name="Semple C.A."/>
            <person name="Seno S."/>
            <person name="Sessa L."/>
            <person name="Sheng Y."/>
            <person name="Shibata Y."/>
            <person name="Shimada H."/>
            <person name="Shimada K."/>
            <person name="Silva D."/>
            <person name="Sinclair B."/>
            <person name="Sperling S."/>
            <person name="Stupka E."/>
            <person name="Sugiura K."/>
            <person name="Sultana R."/>
            <person name="Takenaka Y."/>
            <person name="Taki K."/>
            <person name="Tammoja K."/>
            <person name="Tan S.L."/>
            <person name="Tang S."/>
            <person name="Taylor M.S."/>
            <person name="Tegner J."/>
            <person name="Teichmann S.A."/>
            <person name="Ueda H.R."/>
            <person name="van Nimwegen E."/>
            <person name="Verardo R."/>
            <person name="Wei C.L."/>
            <person name="Yagi K."/>
            <person name="Yamanishi H."/>
            <person name="Zabarovsky E."/>
            <person name="Zhu S."/>
            <person name="Zimmer A."/>
            <person name="Hide W."/>
            <person name="Bult C."/>
            <person name="Grimmond S.M."/>
            <person name="Teasdale R.D."/>
            <person name="Liu E.T."/>
            <person name="Brusic V."/>
            <person name="Quackenbush J."/>
            <person name="Wahlestedt C."/>
            <person name="Mattick J.S."/>
            <person name="Hume D.A."/>
            <person name="Kai C."/>
            <person name="Sasaki D."/>
            <person name="Tomaru Y."/>
            <person name="Fukuda S."/>
            <person name="Kanamori-Katayama M."/>
            <person name="Suzuki M."/>
            <person name="Aoki J."/>
            <person name="Arakawa T."/>
            <person name="Iida J."/>
            <person name="Imamura K."/>
            <person name="Itoh M."/>
            <person name="Kato T."/>
            <person name="Kawaji H."/>
            <person name="Kawagashira N."/>
            <person name="Kawashima T."/>
            <person name="Kojima M."/>
            <person name="Kondo S."/>
            <person name="Konno H."/>
            <person name="Nakano K."/>
            <person name="Ninomiya N."/>
            <person name="Nishio T."/>
            <person name="Okada M."/>
            <person name="Plessy C."/>
            <person name="Shibata K."/>
            <person name="Shiraki T."/>
            <person name="Suzuki S."/>
            <person name="Tagami M."/>
            <person name="Waki K."/>
            <person name="Watahiki A."/>
            <person name="Okamura-Oho Y."/>
            <person name="Suzuki H."/>
            <person name="Kawai J."/>
            <person name="Hayashizaki Y."/>
        </authorList>
    </citation>
    <scope>NUCLEOTIDE SEQUENCE [LARGE SCALE MRNA] (ISOFORM VEGF-B186)</scope>
    <source>
        <strain>C57BL/6J</strain>
    </source>
</reference>
<reference key="5">
    <citation type="journal article" date="2004" name="Genome Res.">
        <title>The status, quality, and expansion of the NIH full-length cDNA project: the Mammalian Gene Collection (MGC).</title>
        <authorList>
            <consortium name="The MGC Project Team"/>
        </authorList>
    </citation>
    <scope>NUCLEOTIDE SEQUENCE [LARGE SCALE MRNA] (ISOFORM VEGF-B167)</scope>
    <source>
        <tissue>Eye</tissue>
    </source>
</reference>
<reference key="6">
    <citation type="journal article" date="2001" name="Circulation">
        <title>Vascular endothelial growth factor-B-deficient mice display an atrial conduction defect.</title>
        <authorList>
            <person name="Aase K."/>
            <person name="von Euler G."/>
            <person name="Li X."/>
            <person name="Ponten A."/>
            <person name="Thoren P."/>
            <person name="Cao R."/>
            <person name="Cao Y."/>
            <person name="Olofsson B."/>
            <person name="Gebre-Medhin S."/>
            <person name="Pekny M."/>
            <person name="Alitalo K."/>
            <person name="Betsholtz C."/>
            <person name="Eriksson U."/>
        </authorList>
    </citation>
    <scope>FUNCTION</scope>
</reference>
<sequence length="207" mass="21914">MSPLLRRLLLVALLQLARTQAPVSQFDGPSHQKKVVPWIDVYARATCQPREVVVPLSMELMGNVVKQLVPSCVTVQRCGGCCPDDGLECVPTGQHQVRMQILMIQYPSSQLGEMSLEEHSQCECRPKKKESAVKPDRVAIPHHRPQPRSVPGWDSTPGASSPADIIHPTPAPGSSARLAPSAVNALTPGPAAAAADAAASSIAKGGA</sequence>
<feature type="signal peptide" evidence="2">
    <location>
        <begin position="1"/>
        <end position="21"/>
    </location>
</feature>
<feature type="chain" id="PRO_0000023399" description="Vascular endothelial growth factor B">
    <location>
        <begin position="22"/>
        <end position="207"/>
    </location>
</feature>
<feature type="region of interest" description="Disordered" evidence="3">
    <location>
        <begin position="129"/>
        <end position="178"/>
    </location>
</feature>
<feature type="compositionally biased region" description="Basic and acidic residues" evidence="3">
    <location>
        <begin position="129"/>
        <end position="139"/>
    </location>
</feature>
<feature type="disulfide bond" evidence="1">
    <location>
        <begin position="47"/>
        <end position="89"/>
    </location>
</feature>
<feature type="disulfide bond" description="Interchain" evidence="1">
    <location>
        <position position="72"/>
    </location>
</feature>
<feature type="disulfide bond" evidence="1">
    <location>
        <begin position="78"/>
        <end position="122"/>
    </location>
</feature>
<feature type="disulfide bond" description="Interchain" evidence="1">
    <location>
        <position position="81"/>
    </location>
</feature>
<feature type="disulfide bond" evidence="1">
    <location>
        <begin position="82"/>
        <end position="124"/>
    </location>
</feature>
<feature type="splice variant" id="VSP_004641" description="In isoform VEGF-B167." evidence="5 6 7">
    <original>RVAIPHHRPQPRSVPGWDSTPGASSPADIIHPTPAPGSSARLAPSAVNALTPGPAAAAADAAASSIAKGGA</original>
    <variation>SPRILCPPCTQRRQRPDPRTCRCRCRRRRFLHCQGRGLELNPDTCRCRKPRK</variation>
    <location>
        <begin position="137"/>
        <end position="207"/>
    </location>
</feature>
<feature type="sequence conflict" description="In Ref. 4; BAE28405." evidence="8" ref="4">
    <original>V</original>
    <variation>A</variation>
    <location>
        <position position="69"/>
    </location>
</feature>